<comment type="function">
    <text evidence="2 5">Cytochrome P450 monooxygenase; part of the gene cluster that mediates the biosynthesis of abscisic acid (ABA), a phytohormone that acts antagonistically toward salicylic acid (SA), jasmonic acid (JA) and ethylene (ETH) signaling, to impede plant defense responses (PubMed:31034868). The first step of the pathway catalyzes the reaction from farnesyl diphosphate to alpha-ionylideneethane performed by the alpha-ionylideneethane synthase abl3 via a three-step reaction mechanism involving 2 neutral intermediates, beta-farnesene and allofarnesene (By similarity). The cytochrome P450 monooxygenase abl1 might then be involved in the conversion of alpha-ionylideneethane to alpha-ionylideneacetic acid (By similarity). Alpha-ionylideneacetic acid is further converted to abscisic acid in 2 steps involving the cytochrome P450 monooxygenase abl2 and the short-chain dehydrogenase/reductase abl4, via the intermediates 1'-deoxy-ABA or 1',4'-trans-diol-ABA, depending on the order of action of these 2 enzymes (By similarity). Abl2 is responsible for the hydroxylation of carbon atom C-1' and abl4 might be involved in the oxidation of the C-4' carbon atom (By similarity).</text>
</comment>
<comment type="cofactor">
    <cofactor evidence="1">
        <name>heme</name>
        <dbReference type="ChEBI" id="CHEBI:30413"/>
    </cofactor>
</comment>
<comment type="pathway">
    <text evidence="5">Hormone biosynthesis.</text>
</comment>
<comment type="subcellular location">
    <subcellularLocation>
        <location evidence="3">Membrane</location>
        <topology evidence="3">Multi-pass membrane protein</topology>
    </subcellularLocation>
</comment>
<comment type="induction">
    <text evidence="5">Expression is induced during the early biotrophic stage of development (PubMed:31034868). Expression is positively regulated by the ABA cluster-specific transcription regulator abl7 (PubMed:31034868).</text>
</comment>
<comment type="similarity">
    <text evidence="7">Belongs to the cytochrome P450 family.</text>
</comment>
<protein>
    <recommendedName>
        <fullName evidence="6">Cytochrome P450 monooxygenase abl2</fullName>
        <ecNumber evidence="8">1.-.-.-</ecNumber>
    </recommendedName>
    <alternativeName>
        <fullName evidence="6">Abscisic acid biosynthesis cluster protein 2</fullName>
    </alternativeName>
</protein>
<dbReference type="EC" id="1.-.-.-" evidence="8"/>
<dbReference type="EMBL" id="FP929136">
    <property type="protein sequence ID" value="CBX99533.1"/>
    <property type="molecule type" value="Genomic_DNA"/>
</dbReference>
<dbReference type="RefSeq" id="XP_003843012.1">
    <property type="nucleotide sequence ID" value="XM_003842964.1"/>
</dbReference>
<dbReference type="SMR" id="E5A7D8"/>
<dbReference type="STRING" id="985895.E5A7D8"/>
<dbReference type="GlyCosmos" id="E5A7D8">
    <property type="glycosylation" value="2 sites, No reported glycans"/>
</dbReference>
<dbReference type="EnsemblFungi" id="CBX99533">
    <property type="protein sequence ID" value="CBX99533"/>
    <property type="gene ID" value="LEMA_P087720.1"/>
</dbReference>
<dbReference type="GeneID" id="13289264"/>
<dbReference type="VEuPathDB" id="FungiDB:LEMA_P087720.1"/>
<dbReference type="eggNOG" id="KOG0158">
    <property type="taxonomic scope" value="Eukaryota"/>
</dbReference>
<dbReference type="HOGENOM" id="CLU_001570_14_11_1"/>
<dbReference type="InParanoid" id="E5A7D8"/>
<dbReference type="OMA" id="PPWVSTH"/>
<dbReference type="OrthoDB" id="1470350at2759"/>
<dbReference type="Proteomes" id="UP000002668">
    <property type="component" value="Genome"/>
</dbReference>
<dbReference type="GO" id="GO:0016020">
    <property type="term" value="C:membrane"/>
    <property type="evidence" value="ECO:0007669"/>
    <property type="project" value="UniProtKB-SubCell"/>
</dbReference>
<dbReference type="GO" id="GO:0020037">
    <property type="term" value="F:heme binding"/>
    <property type="evidence" value="ECO:0007669"/>
    <property type="project" value="InterPro"/>
</dbReference>
<dbReference type="GO" id="GO:0005506">
    <property type="term" value="F:iron ion binding"/>
    <property type="evidence" value="ECO:0007669"/>
    <property type="project" value="InterPro"/>
</dbReference>
<dbReference type="GO" id="GO:0004497">
    <property type="term" value="F:monooxygenase activity"/>
    <property type="evidence" value="ECO:0007669"/>
    <property type="project" value="UniProtKB-KW"/>
</dbReference>
<dbReference type="GO" id="GO:0016705">
    <property type="term" value="F:oxidoreductase activity, acting on paired donors, with incorporation or reduction of molecular oxygen"/>
    <property type="evidence" value="ECO:0007669"/>
    <property type="project" value="InterPro"/>
</dbReference>
<dbReference type="GO" id="GO:0009058">
    <property type="term" value="P:biosynthetic process"/>
    <property type="evidence" value="ECO:0007669"/>
    <property type="project" value="UniProtKB-ARBA"/>
</dbReference>
<dbReference type="CDD" id="cd11058">
    <property type="entry name" value="CYP60B-like"/>
    <property type="match status" value="1"/>
</dbReference>
<dbReference type="Gene3D" id="1.10.630.10">
    <property type="entry name" value="Cytochrome P450"/>
    <property type="match status" value="1"/>
</dbReference>
<dbReference type="InterPro" id="IPR001128">
    <property type="entry name" value="Cyt_P450"/>
</dbReference>
<dbReference type="InterPro" id="IPR017972">
    <property type="entry name" value="Cyt_P450_CS"/>
</dbReference>
<dbReference type="InterPro" id="IPR002401">
    <property type="entry name" value="Cyt_P450_E_grp-I"/>
</dbReference>
<dbReference type="InterPro" id="IPR036396">
    <property type="entry name" value="Cyt_P450_sf"/>
</dbReference>
<dbReference type="InterPro" id="IPR050121">
    <property type="entry name" value="Cytochrome_P450_monoxygenase"/>
</dbReference>
<dbReference type="PANTHER" id="PTHR24305">
    <property type="entry name" value="CYTOCHROME P450"/>
    <property type="match status" value="1"/>
</dbReference>
<dbReference type="PANTHER" id="PTHR24305:SF210">
    <property type="entry name" value="CYTOCHROME P450 MONOOXYGENASE ASQL-RELATED"/>
    <property type="match status" value="1"/>
</dbReference>
<dbReference type="Pfam" id="PF00067">
    <property type="entry name" value="p450"/>
    <property type="match status" value="1"/>
</dbReference>
<dbReference type="PRINTS" id="PR00463">
    <property type="entry name" value="EP450I"/>
</dbReference>
<dbReference type="PRINTS" id="PR00385">
    <property type="entry name" value="P450"/>
</dbReference>
<dbReference type="SUPFAM" id="SSF48264">
    <property type="entry name" value="Cytochrome P450"/>
    <property type="match status" value="1"/>
</dbReference>
<dbReference type="PROSITE" id="PS00086">
    <property type="entry name" value="CYTOCHROME_P450"/>
    <property type="match status" value="1"/>
</dbReference>
<accession>E5A7D8</accession>
<name>ABL2_LEPMJ</name>
<reference key="1">
    <citation type="journal article" date="2011" name="Nat. Commun.">
        <title>Effector diversification within compartments of the Leptosphaeria maculans genome affected by Repeat-Induced Point mutations.</title>
        <authorList>
            <person name="Rouxel T."/>
            <person name="Grandaubert J."/>
            <person name="Hane J.K."/>
            <person name="Hoede C."/>
            <person name="van de Wouw A.P."/>
            <person name="Couloux A."/>
            <person name="Dominguez V."/>
            <person name="Anthouard V."/>
            <person name="Bally P."/>
            <person name="Bourras S."/>
            <person name="Cozijnsen A.J."/>
            <person name="Ciuffetti L.M."/>
            <person name="Degrave A."/>
            <person name="Dilmaghani A."/>
            <person name="Duret L."/>
            <person name="Fudal I."/>
            <person name="Goodwin S.B."/>
            <person name="Gout L."/>
            <person name="Glaser N."/>
            <person name="Linglin J."/>
            <person name="Kema G.H.J."/>
            <person name="Lapalu N."/>
            <person name="Lawrence C.B."/>
            <person name="May K."/>
            <person name="Meyer M."/>
            <person name="Ollivier B."/>
            <person name="Poulain J."/>
            <person name="Schoch C.L."/>
            <person name="Simon A."/>
            <person name="Spatafora J.W."/>
            <person name="Stachowiak A."/>
            <person name="Turgeon B.G."/>
            <person name="Tyler B.M."/>
            <person name="Vincent D."/>
            <person name="Weissenbach J."/>
            <person name="Amselem J."/>
            <person name="Quesneville H."/>
            <person name="Oliver R.P."/>
            <person name="Wincker P."/>
            <person name="Balesdent M.-H."/>
            <person name="Howlett B.J."/>
        </authorList>
    </citation>
    <scope>NUCLEOTIDE SEQUENCE [LARGE SCALE GENOMIC DNA]</scope>
    <source>
        <strain>JN3 / isolate v23.1.3 / race Av1-4-5-6-7-8</strain>
    </source>
</reference>
<reference key="2">
    <citation type="journal article" date="2019" name="Fungal Genet. Biol.">
        <title>Identification of a gene cluster for the synthesis of the plant hormone abscisic acid in the plant pathogen Leptosphaeria maculans.</title>
        <authorList>
            <person name="Darma R."/>
            <person name="Lutz A."/>
            <person name="Elliott C.E."/>
            <person name="Idnurm A."/>
        </authorList>
    </citation>
    <scope>IDENTIFICATION</scope>
    <scope>INDUCTION</scope>
    <scope>FUNCTION</scope>
    <scope>PATHWAY</scope>
</reference>
<evidence type="ECO:0000250" key="1">
    <source>
        <dbReference type="UniProtKB" id="P04798"/>
    </source>
</evidence>
<evidence type="ECO:0000250" key="2">
    <source>
        <dbReference type="UniProtKB" id="Q5K0D9"/>
    </source>
</evidence>
<evidence type="ECO:0000255" key="3"/>
<evidence type="ECO:0000255" key="4">
    <source>
        <dbReference type="PROSITE-ProRule" id="PRU00498"/>
    </source>
</evidence>
<evidence type="ECO:0000269" key="5">
    <source>
    </source>
</evidence>
<evidence type="ECO:0000303" key="6">
    <source>
    </source>
</evidence>
<evidence type="ECO:0000305" key="7"/>
<evidence type="ECO:0000305" key="8">
    <source>
    </source>
</evidence>
<feature type="chain" id="PRO_0000448419" description="Cytochrome P450 monooxygenase abl2">
    <location>
        <begin position="1"/>
        <end position="555"/>
    </location>
</feature>
<feature type="transmembrane region" description="Helical" evidence="3">
    <location>
        <begin position="38"/>
        <end position="58"/>
    </location>
</feature>
<feature type="transmembrane region" description="Helical" evidence="3">
    <location>
        <begin position="141"/>
        <end position="161"/>
    </location>
</feature>
<feature type="binding site" description="axial binding residue" evidence="1">
    <location>
        <position position="489"/>
    </location>
    <ligand>
        <name>heme</name>
        <dbReference type="ChEBI" id="CHEBI:30413"/>
    </ligand>
    <ligandPart>
        <name>Fe</name>
        <dbReference type="ChEBI" id="CHEBI:18248"/>
    </ligandPart>
</feature>
<feature type="glycosylation site" description="N-linked (GlcNAc...) asparagine" evidence="4">
    <location>
        <position position="325"/>
    </location>
</feature>
<feature type="glycosylation site" description="N-linked (GlcNAc...) asparagine" evidence="4">
    <location>
        <position position="360"/>
    </location>
</feature>
<gene>
    <name evidence="6" type="primary">abl2</name>
    <name type="ORF">LEMA_P087720.1</name>
</gene>
<keyword id="KW-0325">Glycoprotein</keyword>
<keyword id="KW-0349">Heme</keyword>
<keyword id="KW-0408">Iron</keyword>
<keyword id="KW-0472">Membrane</keyword>
<keyword id="KW-0479">Metal-binding</keyword>
<keyword id="KW-0503">Monooxygenase</keyword>
<keyword id="KW-0560">Oxidoreductase</keyword>
<keyword id="KW-1185">Reference proteome</keyword>
<keyword id="KW-0812">Transmembrane</keyword>
<keyword id="KW-1133">Transmembrane helix</keyword>
<keyword id="KW-0843">Virulence</keyword>
<organism>
    <name type="scientific">Leptosphaeria maculans (strain JN3 / isolate v23.1.3 / race Av1-4-5-6-7-8)</name>
    <name type="common">Blackleg fungus</name>
    <name type="synonym">Phoma lingam</name>
    <dbReference type="NCBI Taxonomy" id="985895"/>
    <lineage>
        <taxon>Eukaryota</taxon>
        <taxon>Fungi</taxon>
        <taxon>Dikarya</taxon>
        <taxon>Ascomycota</taxon>
        <taxon>Pezizomycotina</taxon>
        <taxon>Dothideomycetes</taxon>
        <taxon>Pleosporomycetidae</taxon>
        <taxon>Pleosporales</taxon>
        <taxon>Pleosporineae</taxon>
        <taxon>Leptosphaeriaceae</taxon>
        <taxon>Plenodomus</taxon>
        <taxon>Plenodomus lingam/Leptosphaeria maculans species complex</taxon>
    </lineage>
</organism>
<proteinExistence type="evidence at transcript level"/>
<sequence length="555" mass="62787">MFGDTSEVLPVAEGKGSSWPTQRLTMTVAFADGDRTWSFDLFSKLAGLALLSFAALFIQRRLFHPLRKYPGPWLNSLSEIPAAIALASGRQQAYYRRLHSRYATSSGTIVRVAPNELSFVDPNAWQDIYNRKPPHMEKHPVFIGAVAKVGGAVGISMAPLATKDHSRHRRALGYSFATSALVEQQEIILKQVRNLISHLKVFARKEKAIDMTDWYTYTTFDLMGDLVFGQPFGCLDGEGPTEWSRAIIHVFVSGAWEQAIRRVAGVNTWAESVLKKILIPKKVALWRRLHFAKSRETTLKRIKDGQRNHKDLMYFLLKNKEARQNLSDLEIMINMVLLVSAGSETTASTLTAWTYFVCTNRSVHRRLLKEIRGNFKTAEHIVWENTQPDQLPYLEATIHEALRLVPPPASSQQRVVPPGGAVICGERIPEGYAVAVPPVAVTHLDINFADPTGFHPERWLPRDDDDWDEKFAKDKLGASQPFSLGPRACLGKTLAYFELRLILASVLWNFDIDLAHAKETKDLWTMEDDMKYLKGYLTWVKPPLPVRLQEVKREA</sequence>